<comment type="subcellular location">
    <subcellularLocation>
        <location evidence="1">Cell membrane</location>
        <topology evidence="1">Lipid-anchor</topology>
    </subcellularLocation>
</comment>
<reference key="1">
    <citation type="journal article" date="1995" name="Science">
        <title>The minimal gene complement of Mycoplasma genitalium.</title>
        <authorList>
            <person name="Fraser C.M."/>
            <person name="Gocayne J.D."/>
            <person name="White O."/>
            <person name="Adams M.D."/>
            <person name="Clayton R.A."/>
            <person name="Fleischmann R.D."/>
            <person name="Bult C.J."/>
            <person name="Kerlavage A.R."/>
            <person name="Sutton G.G."/>
            <person name="Kelley J.M."/>
            <person name="Fritchman J.L."/>
            <person name="Weidman J.F."/>
            <person name="Small K.V."/>
            <person name="Sandusky M."/>
            <person name="Fuhrmann J.L."/>
            <person name="Nguyen D.T."/>
            <person name="Utterback T.R."/>
            <person name="Saudek D.M."/>
            <person name="Phillips C.A."/>
            <person name="Merrick J.M."/>
            <person name="Tomb J.-F."/>
            <person name="Dougherty B.A."/>
            <person name="Bott K.F."/>
            <person name="Hu P.-C."/>
            <person name="Lucier T.S."/>
            <person name="Peterson S.N."/>
            <person name="Smith H.O."/>
            <person name="Hutchison C.A. III"/>
            <person name="Venter J.C."/>
        </authorList>
    </citation>
    <scope>NUCLEOTIDE SEQUENCE [LARGE SCALE GENOMIC DNA]</scope>
    <source>
        <strain>ATCC 33530 / DSM 19775 / NCTC 10195 / G37</strain>
    </source>
</reference>
<dbReference type="EMBL" id="L43967">
    <property type="protein sequence ID" value="AAC71367.1"/>
    <property type="molecule type" value="Genomic_DNA"/>
</dbReference>
<dbReference type="PIR" id="E64216">
    <property type="entry name" value="E64216"/>
</dbReference>
<dbReference type="RefSeq" id="WP_010869356.1">
    <property type="nucleotide sequence ID" value="NC_000908.2"/>
</dbReference>
<dbReference type="STRING" id="243273.MG_149"/>
<dbReference type="GeneID" id="88282281"/>
<dbReference type="KEGG" id="mge:MG_149"/>
<dbReference type="eggNOG" id="ENOG5031Z8V">
    <property type="taxonomic scope" value="Bacteria"/>
</dbReference>
<dbReference type="HOGENOM" id="CLU_989785_0_0_14"/>
<dbReference type="InParanoid" id="P47395"/>
<dbReference type="OrthoDB" id="10013750at2"/>
<dbReference type="BioCyc" id="MGEN243273:G1GJ2-172-MONOMER"/>
<dbReference type="Proteomes" id="UP000000807">
    <property type="component" value="Chromosome"/>
</dbReference>
<dbReference type="GO" id="GO:0005886">
    <property type="term" value="C:plasma membrane"/>
    <property type="evidence" value="ECO:0007669"/>
    <property type="project" value="UniProtKB-SubCell"/>
</dbReference>
<dbReference type="NCBIfam" id="NF045741">
    <property type="entry name" value="MPN162"/>
    <property type="match status" value="1"/>
</dbReference>
<dbReference type="PROSITE" id="PS51257">
    <property type="entry name" value="PROKAR_LIPOPROTEIN"/>
    <property type="match status" value="1"/>
</dbReference>
<feature type="signal peptide" evidence="1">
    <location>
        <begin position="1"/>
        <end position="23"/>
    </location>
</feature>
<feature type="chain" id="PRO_0000014028" description="Uncharacterized lipoprotein MG149">
    <location>
        <begin position="24"/>
        <end position="281"/>
    </location>
</feature>
<feature type="region of interest" description="Disordered" evidence="2">
    <location>
        <begin position="145"/>
        <end position="165"/>
    </location>
</feature>
<feature type="compositionally biased region" description="Basic and acidic residues" evidence="2">
    <location>
        <begin position="150"/>
        <end position="161"/>
    </location>
</feature>
<feature type="lipid moiety-binding region" description="N-palmitoyl cysteine" evidence="1">
    <location>
        <position position="24"/>
    </location>
</feature>
<feature type="lipid moiety-binding region" description="S-diacylglycerol cysteine" evidence="1">
    <location>
        <position position="24"/>
    </location>
</feature>
<name>Y149_MYCGE</name>
<organism>
    <name type="scientific">Mycoplasma genitalium (strain ATCC 33530 / DSM 19775 / NCTC 10195 / G37)</name>
    <name type="common">Mycoplasmoides genitalium</name>
    <dbReference type="NCBI Taxonomy" id="243273"/>
    <lineage>
        <taxon>Bacteria</taxon>
        <taxon>Bacillati</taxon>
        <taxon>Mycoplasmatota</taxon>
        <taxon>Mycoplasmoidales</taxon>
        <taxon>Mycoplasmoidaceae</taxon>
        <taxon>Mycoplasmoides</taxon>
    </lineage>
</organism>
<accession>P47395</accession>
<gene>
    <name type="ordered locus">MG149</name>
</gene>
<evidence type="ECO:0000255" key="1">
    <source>
        <dbReference type="PROSITE-ProRule" id="PRU00303"/>
    </source>
</evidence>
<evidence type="ECO:0000256" key="2">
    <source>
        <dbReference type="SAM" id="MobiDB-lite"/>
    </source>
</evidence>
<sequence length="281" mass="32428">MKLYRSLKAALLPGICTSILLASCASTNTYQDQRNALISLASNRDTLIANAKKSKEEVQKEVTKMNSSTSSMMTATQSVAITTHQTTEKTNNSKYDLDKLFKDYILYVVDNFSGLVFKRTGGHRIQLIDKDKEILDGGNLTKHTHHDHNHMHNHEHEHEEHHDEEETEVVGRALSFTNGIFLVIDYKKDSERKNMSGSTTMMHQHHHEAEEHKEERKLSLNLKAYKFNTPFNISEFISAWHHKESHNSDTEFNNLHNKYDKEELDIIDYNFEEKAVDETIA</sequence>
<proteinExistence type="inferred from homology"/>
<keyword id="KW-1003">Cell membrane</keyword>
<keyword id="KW-0449">Lipoprotein</keyword>
<keyword id="KW-0472">Membrane</keyword>
<keyword id="KW-0564">Palmitate</keyword>
<keyword id="KW-1185">Reference proteome</keyword>
<keyword id="KW-0732">Signal</keyword>
<protein>
    <recommendedName>
        <fullName>Uncharacterized lipoprotein MG149</fullName>
    </recommendedName>
</protein>